<name>XGPT_ACTSZ</name>
<accession>A6VKR2</accession>
<feature type="chain" id="PRO_1000073693" description="Xanthine-guanine phosphoribosyltransferase">
    <location>
        <begin position="1"/>
        <end position="152"/>
    </location>
</feature>
<feature type="binding site" evidence="1">
    <location>
        <begin position="37"/>
        <end position="38"/>
    </location>
    <ligand>
        <name>5-phospho-alpha-D-ribose 1-diphosphate</name>
        <dbReference type="ChEBI" id="CHEBI:58017"/>
    </ligand>
</feature>
<feature type="binding site" evidence="1">
    <location>
        <begin position="88"/>
        <end position="96"/>
    </location>
    <ligand>
        <name>5-phospho-alpha-D-ribose 1-diphosphate</name>
        <dbReference type="ChEBI" id="CHEBI:58017"/>
    </ligand>
</feature>
<feature type="binding site" evidence="1">
    <location>
        <position position="89"/>
    </location>
    <ligand>
        <name>Mg(2+)</name>
        <dbReference type="ChEBI" id="CHEBI:18420"/>
    </ligand>
</feature>
<feature type="binding site" evidence="1">
    <location>
        <begin position="92"/>
        <end position="96"/>
    </location>
    <ligand>
        <name>GMP</name>
        <dbReference type="ChEBI" id="CHEBI:58115"/>
    </ligand>
</feature>
<feature type="binding site" evidence="1">
    <location>
        <position position="92"/>
    </location>
    <ligand>
        <name>guanine</name>
        <dbReference type="ChEBI" id="CHEBI:16235"/>
    </ligand>
</feature>
<feature type="binding site" evidence="1">
    <location>
        <position position="92"/>
    </location>
    <ligand>
        <name>xanthine</name>
        <dbReference type="ChEBI" id="CHEBI:17712"/>
    </ligand>
</feature>
<feature type="binding site" evidence="1">
    <location>
        <begin position="134"/>
        <end position="135"/>
    </location>
    <ligand>
        <name>GMP</name>
        <dbReference type="ChEBI" id="CHEBI:58115"/>
    </ligand>
</feature>
<feature type="binding site" evidence="1">
    <location>
        <position position="135"/>
    </location>
    <ligand>
        <name>guanine</name>
        <dbReference type="ChEBI" id="CHEBI:16235"/>
    </ligand>
</feature>
<feature type="binding site" evidence="1">
    <location>
        <position position="135"/>
    </location>
    <ligand>
        <name>xanthine</name>
        <dbReference type="ChEBI" id="CHEBI:17712"/>
    </ligand>
</feature>
<organism>
    <name type="scientific">Actinobacillus succinogenes (strain ATCC 55618 / DSM 22257 / CCUG 43843 / 130Z)</name>
    <dbReference type="NCBI Taxonomy" id="339671"/>
    <lineage>
        <taxon>Bacteria</taxon>
        <taxon>Pseudomonadati</taxon>
        <taxon>Pseudomonadota</taxon>
        <taxon>Gammaproteobacteria</taxon>
        <taxon>Pasteurellales</taxon>
        <taxon>Pasteurellaceae</taxon>
        <taxon>Actinobacillus</taxon>
    </lineage>
</organism>
<proteinExistence type="inferred from homology"/>
<comment type="function">
    <text evidence="1">Purine salvage pathway enzyme that catalyzes the transfer of the ribosyl-5-phosphate group from 5-phospho-alpha-D-ribose 1-diphosphate (PRPP) to the N9 position of the 6-oxopurines guanine and xanthine to form the corresponding ribonucleotides GMP (guanosine 5'-monophosphate) and XMP (xanthosine 5'-monophosphate), with the release of PPi. To a lesser extent, also acts on hypoxanthine.</text>
</comment>
<comment type="catalytic activity">
    <reaction evidence="1">
        <text>GMP + diphosphate = guanine + 5-phospho-alpha-D-ribose 1-diphosphate</text>
        <dbReference type="Rhea" id="RHEA:25424"/>
        <dbReference type="ChEBI" id="CHEBI:16235"/>
        <dbReference type="ChEBI" id="CHEBI:33019"/>
        <dbReference type="ChEBI" id="CHEBI:58017"/>
        <dbReference type="ChEBI" id="CHEBI:58115"/>
    </reaction>
    <physiologicalReaction direction="right-to-left" evidence="1">
        <dbReference type="Rhea" id="RHEA:25426"/>
    </physiologicalReaction>
</comment>
<comment type="catalytic activity">
    <reaction evidence="1">
        <text>XMP + diphosphate = xanthine + 5-phospho-alpha-D-ribose 1-diphosphate</text>
        <dbReference type="Rhea" id="RHEA:10800"/>
        <dbReference type="ChEBI" id="CHEBI:17712"/>
        <dbReference type="ChEBI" id="CHEBI:33019"/>
        <dbReference type="ChEBI" id="CHEBI:57464"/>
        <dbReference type="ChEBI" id="CHEBI:58017"/>
        <dbReference type="EC" id="2.4.2.22"/>
    </reaction>
    <physiologicalReaction direction="right-to-left" evidence="1">
        <dbReference type="Rhea" id="RHEA:10802"/>
    </physiologicalReaction>
</comment>
<comment type="catalytic activity">
    <reaction evidence="1">
        <text>IMP + diphosphate = hypoxanthine + 5-phospho-alpha-D-ribose 1-diphosphate</text>
        <dbReference type="Rhea" id="RHEA:17973"/>
        <dbReference type="ChEBI" id="CHEBI:17368"/>
        <dbReference type="ChEBI" id="CHEBI:33019"/>
        <dbReference type="ChEBI" id="CHEBI:58017"/>
        <dbReference type="ChEBI" id="CHEBI:58053"/>
    </reaction>
    <physiologicalReaction direction="right-to-left" evidence="1">
        <dbReference type="Rhea" id="RHEA:17975"/>
    </physiologicalReaction>
</comment>
<comment type="cofactor">
    <cofactor evidence="1">
        <name>Mg(2+)</name>
        <dbReference type="ChEBI" id="CHEBI:18420"/>
    </cofactor>
</comment>
<comment type="pathway">
    <text evidence="1">Purine metabolism; GMP biosynthesis via salvage pathway; GMP from guanine: step 1/1.</text>
</comment>
<comment type="pathway">
    <text evidence="1">Purine metabolism; XMP biosynthesis via salvage pathway; XMP from xanthine: step 1/1.</text>
</comment>
<comment type="subunit">
    <text evidence="1">Homotetramer.</text>
</comment>
<comment type="subcellular location">
    <subcellularLocation>
        <location evidence="1">Cell inner membrane</location>
        <topology evidence="1">Peripheral membrane protein</topology>
    </subcellularLocation>
</comment>
<comment type="similarity">
    <text evidence="1">Belongs to the purine/pyrimidine phosphoribosyltransferase family. XGPT subfamily.</text>
</comment>
<reference key="1">
    <citation type="journal article" date="2010" name="BMC Genomics">
        <title>A genomic perspective on the potential of Actinobacillus succinogenes for industrial succinate production.</title>
        <authorList>
            <person name="McKinlay J.B."/>
            <person name="Laivenieks M."/>
            <person name="Schindler B.D."/>
            <person name="McKinlay A.A."/>
            <person name="Siddaramappa S."/>
            <person name="Challacombe J.F."/>
            <person name="Lowry S.R."/>
            <person name="Clum A."/>
            <person name="Lapidus A.L."/>
            <person name="Burkhart K.B."/>
            <person name="Harkins V."/>
            <person name="Vieille C."/>
        </authorList>
    </citation>
    <scope>NUCLEOTIDE SEQUENCE [LARGE SCALE GENOMIC DNA]</scope>
    <source>
        <strain>ATCC 55618 / DSM 22257 / CCUG 43843 / 130Z</strain>
    </source>
</reference>
<sequence>MSEKYVVTWDMFQMHSRKLAERLLPASQWKGIIAVSRGGLFPAAVLSRELGIRHVETVCIASYDHDRQGELRVIHAAETDGEGFIVVDDLVDTGNTAKEIRNMYPKAKFVTVFAKPAGAPLVDDYVIDIPQDTWIEQPWDLGLGFVPPIARK</sequence>
<evidence type="ECO:0000255" key="1">
    <source>
        <dbReference type="HAMAP-Rule" id="MF_01903"/>
    </source>
</evidence>
<protein>
    <recommendedName>
        <fullName evidence="1">Xanthine-guanine phosphoribosyltransferase</fullName>
        <shortName evidence="1">XGPRT</shortName>
        <ecNumber evidence="1">2.4.2.-</ecNumber>
        <ecNumber evidence="1">2.4.2.22</ecNumber>
    </recommendedName>
    <alternativeName>
        <fullName evidence="1">Xanthine phosphoribosyltransferase</fullName>
    </alternativeName>
</protein>
<gene>
    <name evidence="1" type="primary">gpt</name>
    <name type="ordered locus">Asuc_0179</name>
</gene>
<dbReference type="EC" id="2.4.2.-" evidence="1"/>
<dbReference type="EC" id="2.4.2.22" evidence="1"/>
<dbReference type="EMBL" id="CP000746">
    <property type="protein sequence ID" value="ABR73559.1"/>
    <property type="molecule type" value="Genomic_DNA"/>
</dbReference>
<dbReference type="RefSeq" id="WP_011978835.1">
    <property type="nucleotide sequence ID" value="NC_009655.1"/>
</dbReference>
<dbReference type="SMR" id="A6VKR2"/>
<dbReference type="STRING" id="339671.Asuc_0179"/>
<dbReference type="KEGG" id="asu:Asuc_0179"/>
<dbReference type="eggNOG" id="COG2236">
    <property type="taxonomic scope" value="Bacteria"/>
</dbReference>
<dbReference type="HOGENOM" id="CLU_080904_3_0_6"/>
<dbReference type="OrthoDB" id="9789690at2"/>
<dbReference type="UniPathway" id="UPA00602">
    <property type="reaction ID" value="UER00658"/>
</dbReference>
<dbReference type="UniPathway" id="UPA00909">
    <property type="reaction ID" value="UER00887"/>
</dbReference>
<dbReference type="Proteomes" id="UP000001114">
    <property type="component" value="Chromosome"/>
</dbReference>
<dbReference type="GO" id="GO:0005829">
    <property type="term" value="C:cytosol"/>
    <property type="evidence" value="ECO:0007669"/>
    <property type="project" value="TreeGrafter"/>
</dbReference>
<dbReference type="GO" id="GO:0005886">
    <property type="term" value="C:plasma membrane"/>
    <property type="evidence" value="ECO:0007669"/>
    <property type="project" value="UniProtKB-SubCell"/>
</dbReference>
<dbReference type="GO" id="GO:0052657">
    <property type="term" value="F:guanine phosphoribosyltransferase activity"/>
    <property type="evidence" value="ECO:0007669"/>
    <property type="project" value="RHEA"/>
</dbReference>
<dbReference type="GO" id="GO:0004422">
    <property type="term" value="F:hypoxanthine phosphoribosyltransferase activity"/>
    <property type="evidence" value="ECO:0007669"/>
    <property type="project" value="TreeGrafter"/>
</dbReference>
<dbReference type="GO" id="GO:0000287">
    <property type="term" value="F:magnesium ion binding"/>
    <property type="evidence" value="ECO:0007669"/>
    <property type="project" value="UniProtKB-UniRule"/>
</dbReference>
<dbReference type="GO" id="GO:0000310">
    <property type="term" value="F:xanthine phosphoribosyltransferase activity"/>
    <property type="evidence" value="ECO:0007669"/>
    <property type="project" value="UniProtKB-UniRule"/>
</dbReference>
<dbReference type="GO" id="GO:0032263">
    <property type="term" value="P:GMP salvage"/>
    <property type="evidence" value="ECO:0007669"/>
    <property type="project" value="UniProtKB-UniRule"/>
</dbReference>
<dbReference type="GO" id="GO:0032264">
    <property type="term" value="P:IMP salvage"/>
    <property type="evidence" value="ECO:0007669"/>
    <property type="project" value="TreeGrafter"/>
</dbReference>
<dbReference type="GO" id="GO:0006166">
    <property type="term" value="P:purine ribonucleoside salvage"/>
    <property type="evidence" value="ECO:0007669"/>
    <property type="project" value="UniProtKB-KW"/>
</dbReference>
<dbReference type="GO" id="GO:0032265">
    <property type="term" value="P:XMP salvage"/>
    <property type="evidence" value="ECO:0007669"/>
    <property type="project" value="UniProtKB-UniRule"/>
</dbReference>
<dbReference type="CDD" id="cd06223">
    <property type="entry name" value="PRTases_typeI"/>
    <property type="match status" value="1"/>
</dbReference>
<dbReference type="FunFam" id="3.40.50.2020:FF:000009">
    <property type="entry name" value="Xanthine phosphoribosyltransferase"/>
    <property type="match status" value="1"/>
</dbReference>
<dbReference type="Gene3D" id="3.40.50.2020">
    <property type="match status" value="1"/>
</dbReference>
<dbReference type="HAMAP" id="MF_01903">
    <property type="entry name" value="XGPRT"/>
    <property type="match status" value="1"/>
</dbReference>
<dbReference type="InterPro" id="IPR000836">
    <property type="entry name" value="PRibTrfase_dom"/>
</dbReference>
<dbReference type="InterPro" id="IPR029057">
    <property type="entry name" value="PRTase-like"/>
</dbReference>
<dbReference type="InterPro" id="IPR023747">
    <property type="entry name" value="Xanthine_Guanine_PRibTrfase"/>
</dbReference>
<dbReference type="NCBIfam" id="NF006613">
    <property type="entry name" value="PRK09177.1"/>
    <property type="match status" value="1"/>
</dbReference>
<dbReference type="PANTHER" id="PTHR39563">
    <property type="entry name" value="XANTHINE PHOSPHORIBOSYLTRANSFERASE"/>
    <property type="match status" value="1"/>
</dbReference>
<dbReference type="PANTHER" id="PTHR39563:SF1">
    <property type="entry name" value="XANTHINE-GUANINE PHOSPHORIBOSYLTRANSFERASE"/>
    <property type="match status" value="1"/>
</dbReference>
<dbReference type="Pfam" id="PF00156">
    <property type="entry name" value="Pribosyltran"/>
    <property type="match status" value="1"/>
</dbReference>
<dbReference type="SUPFAM" id="SSF53271">
    <property type="entry name" value="PRTase-like"/>
    <property type="match status" value="1"/>
</dbReference>
<dbReference type="PROSITE" id="PS00103">
    <property type="entry name" value="PUR_PYR_PR_TRANSFER"/>
    <property type="match status" value="1"/>
</dbReference>
<keyword id="KW-0997">Cell inner membrane</keyword>
<keyword id="KW-1003">Cell membrane</keyword>
<keyword id="KW-0328">Glycosyltransferase</keyword>
<keyword id="KW-0460">Magnesium</keyword>
<keyword id="KW-0472">Membrane</keyword>
<keyword id="KW-0479">Metal-binding</keyword>
<keyword id="KW-0660">Purine salvage</keyword>
<keyword id="KW-1185">Reference proteome</keyword>
<keyword id="KW-0808">Transferase</keyword>